<name>YDH4_SHV2C</name>
<dbReference type="EMBL" id="M55264">
    <property type="protein sequence ID" value="AAA72931.1"/>
    <property type="molecule type" value="Genomic_DNA"/>
</dbReference>
<proteinExistence type="predicted"/>
<reference key="1">
    <citation type="journal article" date="1990" name="Virology">
        <title>The divergence between two oncogenic Herpesvirus saimiri strains in a genomic region related to the transforming phenotype.</title>
        <authorList>
            <person name="Biesinger B."/>
            <person name="Trimble J.J."/>
            <person name="Desrosiers R.C."/>
            <person name="Fleckenstein B."/>
        </authorList>
    </citation>
    <scope>NUCLEOTIDE SEQUENCE [GENOMIC DNA]</scope>
</reference>
<protein>
    <recommendedName>
        <fullName>Uncharacterized 9.9 kDa protein in DHFR 3'region</fullName>
    </recommendedName>
    <alternativeName>
        <fullName>ORF4</fullName>
    </alternativeName>
</protein>
<sequence>MLKWSTLCFRFVRAMQQALFLTIFFHMQIFCIAFTYNSTFKCSLITTSSLTCYKVLSTLYTQNSSKVYSTESTLYLFLNLSSTGF</sequence>
<organism>
    <name type="scientific">Saimiriine herpesvirus 2 (strain 488)</name>
    <name type="common">SaHV-2</name>
    <name type="synonym">Herpesvirus saimiri</name>
    <dbReference type="NCBI Taxonomy" id="10384"/>
    <lineage>
        <taxon>Viruses</taxon>
        <taxon>Duplodnaviria</taxon>
        <taxon>Heunggongvirae</taxon>
        <taxon>Peploviricota</taxon>
        <taxon>Herviviricetes</taxon>
        <taxon>Herpesvirales</taxon>
        <taxon>Orthoherpesviridae</taxon>
        <taxon>Gammaherpesvirinae</taxon>
        <taxon>Rhadinovirus</taxon>
        <taxon>Rhadinovirus saimiriinegamma2</taxon>
        <taxon>Saimiriine herpesvirus 2</taxon>
    </lineage>
</organism>
<feature type="chain" id="PRO_0000116197" description="Uncharacterized 9.9 kDa protein in DHFR 3'region">
    <location>
        <begin position="1"/>
        <end position="85"/>
    </location>
</feature>
<accession>P22578</accession>
<organismHost>
    <name type="scientific">Saimiri sciureus</name>
    <name type="common">Common squirrel monkey</name>
    <dbReference type="NCBI Taxonomy" id="9521"/>
</organismHost>